<organism>
    <name type="scientific">Escherichia coli (strain UTI89 / UPEC)</name>
    <dbReference type="NCBI Taxonomy" id="364106"/>
    <lineage>
        <taxon>Bacteria</taxon>
        <taxon>Pseudomonadati</taxon>
        <taxon>Pseudomonadota</taxon>
        <taxon>Gammaproteobacteria</taxon>
        <taxon>Enterobacterales</taxon>
        <taxon>Enterobacteriaceae</taxon>
        <taxon>Escherichia</taxon>
    </lineage>
</organism>
<keyword id="KW-0235">DNA replication</keyword>
<keyword id="KW-0238">DNA-binding</keyword>
<keyword id="KW-0639">Primosome</keyword>
<gene>
    <name evidence="1" type="primary">dnaT</name>
    <name type="ordered locus">UTI89_C5068</name>
</gene>
<reference key="1">
    <citation type="journal article" date="2006" name="Proc. Natl. Acad. Sci. U.S.A.">
        <title>Identification of genes subject to positive selection in uropathogenic strains of Escherichia coli: a comparative genomics approach.</title>
        <authorList>
            <person name="Chen S.L."/>
            <person name="Hung C.-S."/>
            <person name="Xu J."/>
            <person name="Reigstad C.S."/>
            <person name="Magrini V."/>
            <person name="Sabo A."/>
            <person name="Blasiar D."/>
            <person name="Bieri T."/>
            <person name="Meyer R.R."/>
            <person name="Ozersky P."/>
            <person name="Armstrong J.R."/>
            <person name="Fulton R.S."/>
            <person name="Latreille J.P."/>
            <person name="Spieth J."/>
            <person name="Hooton T.M."/>
            <person name="Mardis E.R."/>
            <person name="Hultgren S.J."/>
            <person name="Gordon J.I."/>
        </authorList>
    </citation>
    <scope>NUCLEOTIDE SEQUENCE [LARGE SCALE GENOMIC DNA]</scope>
    <source>
        <strain>UTI89 / UPEC</strain>
    </source>
</reference>
<name>DNAT_ECOUT</name>
<proteinExistence type="inferred from homology"/>
<protein>
    <recommendedName>
        <fullName evidence="1">Replication restart protein DnaT</fullName>
    </recommendedName>
</protein>
<feature type="chain" id="PRO_1000064465" description="Replication restart protein DnaT">
    <location>
        <begin position="1"/>
        <end position="179"/>
    </location>
</feature>
<feature type="region of interest" description="Disordered" evidence="2">
    <location>
        <begin position="156"/>
        <end position="179"/>
    </location>
</feature>
<accession>Q1R2E3</accession>
<evidence type="ECO:0000255" key="1">
    <source>
        <dbReference type="HAMAP-Rule" id="MF_01061"/>
    </source>
</evidence>
<evidence type="ECO:0000256" key="2">
    <source>
        <dbReference type="SAM" id="MobiDB-lite"/>
    </source>
</evidence>
<dbReference type="EMBL" id="CP000243">
    <property type="protein sequence ID" value="ABE10471.1"/>
    <property type="molecule type" value="Genomic_DNA"/>
</dbReference>
<dbReference type="RefSeq" id="WP_001350779.1">
    <property type="nucleotide sequence ID" value="NZ_CP064825.1"/>
</dbReference>
<dbReference type="SMR" id="Q1R2E3"/>
<dbReference type="KEGG" id="eci:UTI89_C5068"/>
<dbReference type="HOGENOM" id="CLU_1501592_0_0_6"/>
<dbReference type="Proteomes" id="UP000001952">
    <property type="component" value="Chromosome"/>
</dbReference>
<dbReference type="GO" id="GO:1990077">
    <property type="term" value="C:primosome complex"/>
    <property type="evidence" value="ECO:0007669"/>
    <property type="project" value="UniProtKB-KW"/>
</dbReference>
<dbReference type="GO" id="GO:0006269">
    <property type="term" value="P:DNA replication, synthesis of primer"/>
    <property type="evidence" value="ECO:0007669"/>
    <property type="project" value="UniProtKB-UniRule"/>
</dbReference>
<dbReference type="Gene3D" id="1.10.8.1180">
    <property type="match status" value="1"/>
</dbReference>
<dbReference type="HAMAP" id="MF_01061">
    <property type="entry name" value="DnaT"/>
    <property type="match status" value="1"/>
</dbReference>
<dbReference type="InterPro" id="IPR020917">
    <property type="entry name" value="DnaT"/>
</dbReference>
<dbReference type="InterPro" id="IPR040480">
    <property type="entry name" value="DnaT_DNA_bind"/>
</dbReference>
<dbReference type="NCBIfam" id="NF002770">
    <property type="entry name" value="PRK02854.1"/>
    <property type="match status" value="1"/>
</dbReference>
<dbReference type="Pfam" id="PF17948">
    <property type="entry name" value="DnaT"/>
    <property type="match status" value="1"/>
</dbReference>
<comment type="function">
    <text evidence="1">Involved in the restart of stalled replication forks, which reloads the replicative helicase on sites other than the origin of replication. Can function in multiple replication restart pathways. Displaces ssDNA from a PriB-ssDNA complex. Probably forms a spiral filament on ssDNA.</text>
</comment>
<comment type="subunit">
    <text evidence="1">Homooligomerizes. Interacts with PriB. Component of the replication restart primosome. Primosome assembly occurs via a 'hand-off' mechanism. PriA binds to replication forks, subsequently PriB then DnaT bind; DnaT then displaces ssDNA to generate the helicase loading substrate.</text>
</comment>
<comment type="similarity">
    <text evidence="1">Belongs to the DnaT family.</text>
</comment>
<sequence length="179" mass="19459">MSSRVLTPDVVGIDALVHDHQTVLAKAEGGVVAVFANNAPAFYAITPARLAELLALEEKLARPGSDVALDDQLYQEPQTAPVAVPMGKFAMYPDWQPDADFIRLAALWGVALRESVTAEELASFIAYWQAEGKVFHHVQWQQKLARSLQIGRASNGGLPKRDVNTVSEPDSQIPPGFRG</sequence>